<dbReference type="EMBL" id="U48730">
    <property type="protein sequence ID" value="AAC50485.2"/>
    <property type="molecule type" value="mRNA"/>
</dbReference>
<dbReference type="EMBL" id="U47686">
    <property type="protein sequence ID" value="AAC50491.1"/>
    <property type="molecule type" value="mRNA"/>
</dbReference>
<dbReference type="EMBL" id="AJ412888">
    <property type="protein sequence ID" value="CAD19638.1"/>
    <property type="molecule type" value="Genomic_DNA"/>
</dbReference>
<dbReference type="EMBL" id="AJ412889">
    <property type="protein sequence ID" value="CAD19638.1"/>
    <property type="status" value="JOINED"/>
    <property type="molecule type" value="Genomic_DNA"/>
</dbReference>
<dbReference type="EMBL" id="AJ412890">
    <property type="protein sequence ID" value="CAD19638.1"/>
    <property type="status" value="JOINED"/>
    <property type="molecule type" value="Genomic_DNA"/>
</dbReference>
<dbReference type="EMBL" id="AJ412891">
    <property type="protein sequence ID" value="CAD19638.1"/>
    <property type="status" value="JOINED"/>
    <property type="molecule type" value="Genomic_DNA"/>
</dbReference>
<dbReference type="EMBL" id="AJ412892">
    <property type="protein sequence ID" value="CAD19638.1"/>
    <property type="status" value="JOINED"/>
    <property type="molecule type" value="Genomic_DNA"/>
</dbReference>
<dbReference type="EMBL" id="AJ412893">
    <property type="protein sequence ID" value="CAD19638.1"/>
    <property type="status" value="JOINED"/>
    <property type="molecule type" value="Genomic_DNA"/>
</dbReference>
<dbReference type="EMBL" id="AJ412894">
    <property type="protein sequence ID" value="CAD19638.1"/>
    <property type="status" value="JOINED"/>
    <property type="molecule type" value="Genomic_DNA"/>
</dbReference>
<dbReference type="EMBL" id="AJ412895">
    <property type="protein sequence ID" value="CAD19638.1"/>
    <property type="status" value="JOINED"/>
    <property type="molecule type" value="Genomic_DNA"/>
</dbReference>
<dbReference type="EMBL" id="AJ412896">
    <property type="protein sequence ID" value="CAD19638.1"/>
    <property type="status" value="JOINED"/>
    <property type="molecule type" value="Genomic_DNA"/>
</dbReference>
<dbReference type="EMBL" id="AJ412897">
    <property type="protein sequence ID" value="CAD19638.1"/>
    <property type="status" value="JOINED"/>
    <property type="molecule type" value="Genomic_DNA"/>
</dbReference>
<dbReference type="EMBL" id="AJ412898">
    <property type="protein sequence ID" value="CAD19638.1"/>
    <property type="status" value="JOINED"/>
    <property type="molecule type" value="Genomic_DNA"/>
</dbReference>
<dbReference type="EMBL" id="AJ412899">
    <property type="protein sequence ID" value="CAD19638.1"/>
    <property type="status" value="JOINED"/>
    <property type="molecule type" value="Genomic_DNA"/>
</dbReference>
<dbReference type="EMBL" id="BC065227">
    <property type="protein sequence ID" value="AAH65227.1"/>
    <property type="molecule type" value="mRNA"/>
</dbReference>
<dbReference type="CCDS" id="CCDS11423.1"/>
<dbReference type="RefSeq" id="NP_036580.2">
    <property type="nucleotide sequence ID" value="NM_012448.3"/>
</dbReference>
<dbReference type="RefSeq" id="XP_024306665.1">
    <property type="nucleotide sequence ID" value="XM_024450897.2"/>
</dbReference>
<dbReference type="RefSeq" id="XP_024306666.1">
    <property type="nucleotide sequence ID" value="XM_024450898.2"/>
</dbReference>
<dbReference type="RefSeq" id="XP_054172973.1">
    <property type="nucleotide sequence ID" value="XM_054316998.1"/>
</dbReference>
<dbReference type="RefSeq" id="XP_054172974.1">
    <property type="nucleotide sequence ID" value="XM_054316999.1"/>
</dbReference>
<dbReference type="PDB" id="6MBW">
    <property type="method" value="X-ray"/>
    <property type="resolution" value="3.29 A"/>
    <property type="chains" value="A/B=136-703"/>
</dbReference>
<dbReference type="PDB" id="6MBZ">
    <property type="method" value="X-ray"/>
    <property type="resolution" value="3.21 A"/>
    <property type="chains" value="A/B=136-703"/>
</dbReference>
<dbReference type="PDBsum" id="6MBW"/>
<dbReference type="PDBsum" id="6MBZ"/>
<dbReference type="SMR" id="P51692"/>
<dbReference type="BioGRID" id="112654">
    <property type="interactions" value="107"/>
</dbReference>
<dbReference type="ComplexPortal" id="CPX-6044">
    <property type="entry name" value="STAT3/STAT5B complex"/>
</dbReference>
<dbReference type="ComplexPortal" id="CPX-6045">
    <property type="entry name" value="STAT5A/STAT5B complex"/>
</dbReference>
<dbReference type="CORUM" id="P51692"/>
<dbReference type="FunCoup" id="P51692">
    <property type="interactions" value="3576"/>
</dbReference>
<dbReference type="IntAct" id="P51692">
    <property type="interactions" value="134"/>
</dbReference>
<dbReference type="MINT" id="P51692"/>
<dbReference type="STRING" id="9606.ENSP00000293328"/>
<dbReference type="BindingDB" id="P51692"/>
<dbReference type="ChEMBL" id="CHEMBL5817"/>
<dbReference type="DrugBank" id="DB01254">
    <property type="generic name" value="Dasatinib"/>
</dbReference>
<dbReference type="DrugCentral" id="P51692"/>
<dbReference type="GlyGen" id="P51692">
    <property type="glycosylation" value="2 sites, 1 O-linked glycan (2 sites)"/>
</dbReference>
<dbReference type="iPTMnet" id="P51692"/>
<dbReference type="PhosphoSitePlus" id="P51692"/>
<dbReference type="BioMuta" id="STAT5B"/>
<dbReference type="DMDM" id="41019536"/>
<dbReference type="CPTAC" id="CPTAC-1638"/>
<dbReference type="jPOST" id="P51692"/>
<dbReference type="MassIVE" id="P51692"/>
<dbReference type="PaxDb" id="9606-ENSP00000293328"/>
<dbReference type="PeptideAtlas" id="P51692"/>
<dbReference type="ProteomicsDB" id="56378"/>
<dbReference type="Pumba" id="P51692"/>
<dbReference type="ABCD" id="P51692">
    <property type="antibodies" value="2 sequenced antibodies"/>
</dbReference>
<dbReference type="Antibodypedia" id="3804">
    <property type="antibodies" value="951 antibodies from 44 providers"/>
</dbReference>
<dbReference type="CPTC" id="P51692">
    <property type="antibodies" value="1 antibody"/>
</dbReference>
<dbReference type="DNASU" id="6777"/>
<dbReference type="Ensembl" id="ENST00000293328.8">
    <property type="protein sequence ID" value="ENSP00000293328.3"/>
    <property type="gene ID" value="ENSG00000173757.11"/>
</dbReference>
<dbReference type="Ensembl" id="ENST00000415845.2">
    <property type="protein sequence ID" value="ENSP00000398379.2"/>
    <property type="gene ID" value="ENSG00000173757.11"/>
</dbReference>
<dbReference type="Ensembl" id="ENST00000698776.1">
    <property type="protein sequence ID" value="ENSP00000513923.1"/>
    <property type="gene ID" value="ENSG00000173757.11"/>
</dbReference>
<dbReference type="Ensembl" id="ENST00000698777.1">
    <property type="protein sequence ID" value="ENSP00000513924.1"/>
    <property type="gene ID" value="ENSG00000173757.11"/>
</dbReference>
<dbReference type="GeneID" id="6777"/>
<dbReference type="KEGG" id="hsa:6777"/>
<dbReference type="MANE-Select" id="ENST00000293328.8">
    <property type="protein sequence ID" value="ENSP00000293328.3"/>
    <property type="RefSeq nucleotide sequence ID" value="NM_012448.4"/>
    <property type="RefSeq protein sequence ID" value="NP_036580.2"/>
</dbReference>
<dbReference type="UCSC" id="uc002hzh.4">
    <property type="organism name" value="human"/>
</dbReference>
<dbReference type="AGR" id="HGNC:11367"/>
<dbReference type="CTD" id="6777"/>
<dbReference type="DisGeNET" id="6777"/>
<dbReference type="GeneCards" id="STAT5B"/>
<dbReference type="HGNC" id="HGNC:11367">
    <property type="gene designation" value="STAT5B"/>
</dbReference>
<dbReference type="HPA" id="ENSG00000173757">
    <property type="expression patterns" value="Low tissue specificity"/>
</dbReference>
<dbReference type="MalaCards" id="STAT5B"/>
<dbReference type="MIM" id="245590">
    <property type="type" value="phenotype"/>
</dbReference>
<dbReference type="MIM" id="604260">
    <property type="type" value="gene"/>
</dbReference>
<dbReference type="MIM" id="618985">
    <property type="type" value="phenotype"/>
</dbReference>
<dbReference type="neXtProt" id="NX_P51692"/>
<dbReference type="OpenTargets" id="ENSG00000173757"/>
<dbReference type="Orphanet" id="520">
    <property type="disease" value="Acute promyelocytic leukemia"/>
</dbReference>
<dbReference type="Orphanet" id="220465">
    <property type="disease" value="Laron syndrome with immunodeficiency"/>
</dbReference>
<dbReference type="PharmGKB" id="PA36186"/>
<dbReference type="VEuPathDB" id="HostDB:ENSG00000173757"/>
<dbReference type="eggNOG" id="KOG3667">
    <property type="taxonomic scope" value="Eukaryota"/>
</dbReference>
<dbReference type="GeneTree" id="ENSGT01080000257420"/>
<dbReference type="HOGENOM" id="CLU_014189_2_2_1"/>
<dbReference type="InParanoid" id="P51692"/>
<dbReference type="OMA" id="WIEEKMW"/>
<dbReference type="OrthoDB" id="19300at2759"/>
<dbReference type="PAN-GO" id="P51692">
    <property type="GO annotations" value="9 GO annotations based on evolutionary models"/>
</dbReference>
<dbReference type="PhylomeDB" id="P51692"/>
<dbReference type="TreeFam" id="TF318648"/>
<dbReference type="PathwayCommons" id="P51692"/>
<dbReference type="Reactome" id="R-HSA-1170546">
    <property type="pathway name" value="Prolactin receptor signaling"/>
</dbReference>
<dbReference type="Reactome" id="R-HSA-1266695">
    <property type="pathway name" value="Interleukin-7 signaling"/>
</dbReference>
<dbReference type="Reactome" id="R-HSA-1433557">
    <property type="pathway name" value="Signaling by SCF-KIT"/>
</dbReference>
<dbReference type="Reactome" id="R-HSA-1839117">
    <property type="pathway name" value="Signaling by cytosolic FGFR1 fusion mutants"/>
</dbReference>
<dbReference type="Reactome" id="R-HSA-186763">
    <property type="pathway name" value="Downstream signal transduction"/>
</dbReference>
<dbReference type="Reactome" id="R-HSA-2586552">
    <property type="pathway name" value="Signaling by Leptin"/>
</dbReference>
<dbReference type="Reactome" id="R-HSA-512988">
    <property type="pathway name" value="Interleukin-3, Interleukin-5 and GM-CSF signaling"/>
</dbReference>
<dbReference type="Reactome" id="R-HSA-8854691">
    <property type="pathway name" value="Interleukin-20 family signaling"/>
</dbReference>
<dbReference type="Reactome" id="R-HSA-8983432">
    <property type="pathway name" value="Interleukin-15 signaling"/>
</dbReference>
<dbReference type="Reactome" id="R-HSA-8985947">
    <property type="pathway name" value="Interleukin-9 signaling"/>
</dbReference>
<dbReference type="Reactome" id="R-HSA-9020558">
    <property type="pathway name" value="Interleukin-2 signaling"/>
</dbReference>
<dbReference type="Reactome" id="R-HSA-9020958">
    <property type="pathway name" value="Interleukin-21 signaling"/>
</dbReference>
<dbReference type="Reactome" id="R-HSA-9027283">
    <property type="pathway name" value="Erythropoietin activates STAT5"/>
</dbReference>
<dbReference type="Reactome" id="R-HSA-9645135">
    <property type="pathway name" value="STAT5 Activation"/>
</dbReference>
<dbReference type="Reactome" id="R-HSA-9670439">
    <property type="pathway name" value="Signaling by phosphorylated juxtamembrane, extracellular and kinase domain KIT mutants"/>
</dbReference>
<dbReference type="Reactome" id="R-HSA-9674555">
    <property type="pathway name" value="Signaling by CSF3 (G-CSF)"/>
</dbReference>
<dbReference type="Reactome" id="R-HSA-9702518">
    <property type="pathway name" value="STAT5 activation downstream of FLT3 ITD mutants"/>
</dbReference>
<dbReference type="Reactome" id="R-HSA-9703465">
    <property type="pathway name" value="Signaling by FLT3 fusion proteins"/>
</dbReference>
<dbReference type="Reactome" id="R-HSA-9705462">
    <property type="pathway name" value="Inactivation of CSF3 (G-CSF) signaling"/>
</dbReference>
<dbReference type="Reactome" id="R-HSA-982772">
    <property type="pathway name" value="Growth hormone receptor signaling"/>
</dbReference>
<dbReference type="SignaLink" id="P51692"/>
<dbReference type="SIGNOR" id="P51692"/>
<dbReference type="BioGRID-ORCS" id="6777">
    <property type="hits" value="52 hits in 1190 CRISPR screens"/>
</dbReference>
<dbReference type="ChiTaRS" id="STAT5B">
    <property type="organism name" value="human"/>
</dbReference>
<dbReference type="GeneWiki" id="STAT5B"/>
<dbReference type="GenomeRNAi" id="6777"/>
<dbReference type="Pharos" id="P51692">
    <property type="development level" value="Tchem"/>
</dbReference>
<dbReference type="PRO" id="PR:P51692"/>
<dbReference type="Proteomes" id="UP000005640">
    <property type="component" value="Chromosome 17"/>
</dbReference>
<dbReference type="RNAct" id="P51692">
    <property type="molecule type" value="protein"/>
</dbReference>
<dbReference type="Bgee" id="ENSG00000173757">
    <property type="expression patterns" value="Expressed in blood and 207 other cell types or tissues"/>
</dbReference>
<dbReference type="ExpressionAtlas" id="P51692">
    <property type="expression patterns" value="baseline and differential"/>
</dbReference>
<dbReference type="GO" id="GO:0000785">
    <property type="term" value="C:chromatin"/>
    <property type="evidence" value="ECO:0000247"/>
    <property type="project" value="NTNU_SB"/>
</dbReference>
<dbReference type="GO" id="GO:0005737">
    <property type="term" value="C:cytoplasm"/>
    <property type="evidence" value="ECO:0000314"/>
    <property type="project" value="UniProtKB"/>
</dbReference>
<dbReference type="GO" id="GO:0005829">
    <property type="term" value="C:cytosol"/>
    <property type="evidence" value="ECO:0000304"/>
    <property type="project" value="Reactome"/>
</dbReference>
<dbReference type="GO" id="GO:0005654">
    <property type="term" value="C:nucleoplasm"/>
    <property type="evidence" value="ECO:0000304"/>
    <property type="project" value="Reactome"/>
</dbReference>
<dbReference type="GO" id="GO:0005634">
    <property type="term" value="C:nucleus"/>
    <property type="evidence" value="ECO:0000314"/>
    <property type="project" value="UniProtKB"/>
</dbReference>
<dbReference type="GO" id="GO:0090575">
    <property type="term" value="C:RNA polymerase II transcription regulator complex"/>
    <property type="evidence" value="ECO:0000318"/>
    <property type="project" value="GO_Central"/>
</dbReference>
<dbReference type="GO" id="GO:0003682">
    <property type="term" value="F:chromatin binding"/>
    <property type="evidence" value="ECO:0000250"/>
    <property type="project" value="UniProtKB"/>
</dbReference>
<dbReference type="GO" id="GO:0001228">
    <property type="term" value="F:DNA-binding transcription activator activity, RNA polymerase II-specific"/>
    <property type="evidence" value="ECO:0000314"/>
    <property type="project" value="UniProtKB"/>
</dbReference>
<dbReference type="GO" id="GO:0003700">
    <property type="term" value="F:DNA-binding transcription factor activity"/>
    <property type="evidence" value="ECO:0000304"/>
    <property type="project" value="ProtInc"/>
</dbReference>
<dbReference type="GO" id="GO:0000981">
    <property type="term" value="F:DNA-binding transcription factor activity, RNA polymerase II-specific"/>
    <property type="evidence" value="ECO:0000247"/>
    <property type="project" value="NTNU_SB"/>
</dbReference>
<dbReference type="GO" id="GO:0042802">
    <property type="term" value="F:identical protein binding"/>
    <property type="evidence" value="ECO:0000353"/>
    <property type="project" value="IntAct"/>
</dbReference>
<dbReference type="GO" id="GO:0035259">
    <property type="term" value="F:nuclear glucocorticoid receptor binding"/>
    <property type="evidence" value="ECO:0000353"/>
    <property type="project" value="BHF-UCL"/>
</dbReference>
<dbReference type="GO" id="GO:0046983">
    <property type="term" value="F:protein dimerization activity"/>
    <property type="evidence" value="ECO:0000250"/>
    <property type="project" value="UniProtKB"/>
</dbReference>
<dbReference type="GO" id="GO:0042803">
    <property type="term" value="F:protein homodimerization activity"/>
    <property type="evidence" value="ECO:0000314"/>
    <property type="project" value="UniProtKB"/>
</dbReference>
<dbReference type="GO" id="GO:0000978">
    <property type="term" value="F:RNA polymerase II cis-regulatory region sequence-specific DNA binding"/>
    <property type="evidence" value="ECO:0000318"/>
    <property type="project" value="GO_Central"/>
</dbReference>
<dbReference type="GO" id="GO:0050798">
    <property type="term" value="P:activated T cell proliferation"/>
    <property type="evidence" value="ECO:0007669"/>
    <property type="project" value="Ensembl"/>
</dbReference>
<dbReference type="GO" id="GO:0030183">
    <property type="term" value="P:B cell differentiation"/>
    <property type="evidence" value="ECO:0007669"/>
    <property type="project" value="Ensembl"/>
</dbReference>
<dbReference type="GO" id="GO:0007259">
    <property type="term" value="P:cell surface receptor signaling pathway via JAK-STAT"/>
    <property type="evidence" value="ECO:0000318"/>
    <property type="project" value="GO_Central"/>
</dbReference>
<dbReference type="GO" id="GO:0071364">
    <property type="term" value="P:cellular response to epidermal growth factor stimulus"/>
    <property type="evidence" value="ECO:0000250"/>
    <property type="project" value="UniProtKB"/>
</dbReference>
<dbReference type="GO" id="GO:0071363">
    <property type="term" value="P:cellular response to growth factor stimulus"/>
    <property type="evidence" value="ECO:0000250"/>
    <property type="project" value="UniProtKB"/>
</dbReference>
<dbReference type="GO" id="GO:0032870">
    <property type="term" value="P:cellular response to hormone stimulus"/>
    <property type="evidence" value="ECO:0000314"/>
    <property type="project" value="BHF-UCL"/>
</dbReference>
<dbReference type="GO" id="GO:0019221">
    <property type="term" value="P:cytokine-mediated signaling pathway"/>
    <property type="evidence" value="ECO:0000318"/>
    <property type="project" value="GO_Central"/>
</dbReference>
<dbReference type="GO" id="GO:0006952">
    <property type="term" value="P:defense response"/>
    <property type="evidence" value="ECO:0000318"/>
    <property type="project" value="GO_Central"/>
</dbReference>
<dbReference type="GO" id="GO:0046543">
    <property type="term" value="P:development of secondary female sexual characteristics"/>
    <property type="evidence" value="ECO:0007669"/>
    <property type="project" value="Ensembl"/>
</dbReference>
<dbReference type="GO" id="GO:0046544">
    <property type="term" value="P:development of secondary male sexual characteristics"/>
    <property type="evidence" value="ECO:0007669"/>
    <property type="project" value="Ensembl"/>
</dbReference>
<dbReference type="GO" id="GO:0030218">
    <property type="term" value="P:erythrocyte differentiation"/>
    <property type="evidence" value="ECO:0007669"/>
    <property type="project" value="Ensembl"/>
</dbReference>
<dbReference type="GO" id="GO:0038162">
    <property type="term" value="P:erythropoietin-mediated signaling pathway"/>
    <property type="evidence" value="ECO:0000314"/>
    <property type="project" value="UniProt"/>
</dbReference>
<dbReference type="GO" id="GO:0007565">
    <property type="term" value="P:female pregnancy"/>
    <property type="evidence" value="ECO:0007669"/>
    <property type="project" value="Ensembl"/>
</dbReference>
<dbReference type="GO" id="GO:0042492">
    <property type="term" value="P:gamma-delta T cell differentiation"/>
    <property type="evidence" value="ECO:0007669"/>
    <property type="project" value="Ensembl"/>
</dbReference>
<dbReference type="GO" id="GO:0060397">
    <property type="term" value="P:growth hormone receptor signaling pathway via JAK-STAT"/>
    <property type="evidence" value="ECO:0000314"/>
    <property type="project" value="BHF-UCL"/>
</dbReference>
<dbReference type="GO" id="GO:0007595">
    <property type="term" value="P:lactation"/>
    <property type="evidence" value="ECO:0007669"/>
    <property type="project" value="Ensembl"/>
</dbReference>
<dbReference type="GO" id="GO:0019915">
    <property type="term" value="P:lipid storage"/>
    <property type="evidence" value="ECO:0007669"/>
    <property type="project" value="Ensembl"/>
</dbReference>
<dbReference type="GO" id="GO:0001553">
    <property type="term" value="P:luteinization"/>
    <property type="evidence" value="ECO:0007669"/>
    <property type="project" value="Ensembl"/>
</dbReference>
<dbReference type="GO" id="GO:0097531">
    <property type="term" value="P:mast cell migration"/>
    <property type="evidence" value="ECO:0007669"/>
    <property type="project" value="Ensembl"/>
</dbReference>
<dbReference type="GO" id="GO:0000278">
    <property type="term" value="P:mitotic cell cycle"/>
    <property type="evidence" value="ECO:0007669"/>
    <property type="project" value="Ensembl"/>
</dbReference>
<dbReference type="GO" id="GO:0033028">
    <property type="term" value="P:myeloid cell apoptotic process"/>
    <property type="evidence" value="ECO:0007669"/>
    <property type="project" value="Ensembl"/>
</dbReference>
<dbReference type="GO" id="GO:0001779">
    <property type="term" value="P:natural killer cell differentiation"/>
    <property type="evidence" value="ECO:0007669"/>
    <property type="project" value="Ensembl"/>
</dbReference>
<dbReference type="GO" id="GO:0042267">
    <property type="term" value="P:natural killer cell mediated cytotoxicity"/>
    <property type="evidence" value="ECO:0007669"/>
    <property type="project" value="Ensembl"/>
</dbReference>
<dbReference type="GO" id="GO:0001787">
    <property type="term" value="P:natural killer cell proliferation"/>
    <property type="evidence" value="ECO:0007669"/>
    <property type="project" value="Ensembl"/>
</dbReference>
<dbReference type="GO" id="GO:0045647">
    <property type="term" value="P:negative regulation of erythrocyte differentiation"/>
    <property type="evidence" value="ECO:0007669"/>
    <property type="project" value="Ensembl"/>
</dbReference>
<dbReference type="GO" id="GO:0033033">
    <property type="term" value="P:negative regulation of myeloid cell apoptotic process"/>
    <property type="evidence" value="ECO:0007669"/>
    <property type="project" value="Ensembl"/>
</dbReference>
<dbReference type="GO" id="GO:0048541">
    <property type="term" value="P:Peyer's patch development"/>
    <property type="evidence" value="ECO:0007669"/>
    <property type="project" value="Ensembl"/>
</dbReference>
<dbReference type="GO" id="GO:0042104">
    <property type="term" value="P:positive regulation of activated T cell proliferation"/>
    <property type="evidence" value="ECO:0007669"/>
    <property type="project" value="Ensembl"/>
</dbReference>
<dbReference type="GO" id="GO:0045579">
    <property type="term" value="P:positive regulation of B cell differentiation"/>
    <property type="evidence" value="ECO:0007669"/>
    <property type="project" value="Ensembl"/>
</dbReference>
<dbReference type="GO" id="GO:0045648">
    <property type="term" value="P:positive regulation of erythrocyte differentiation"/>
    <property type="evidence" value="ECO:0000314"/>
    <property type="project" value="UniProtKB"/>
</dbReference>
<dbReference type="GO" id="GO:0045588">
    <property type="term" value="P:positive regulation of gamma-delta T cell differentiation"/>
    <property type="evidence" value="ECO:0007669"/>
    <property type="project" value="Ensembl"/>
</dbReference>
<dbReference type="GO" id="GO:0050729">
    <property type="term" value="P:positive regulation of inflammatory response"/>
    <property type="evidence" value="ECO:0007669"/>
    <property type="project" value="Ensembl"/>
</dbReference>
<dbReference type="GO" id="GO:0032743">
    <property type="term" value="P:positive regulation of interleukin-2 production"/>
    <property type="evidence" value="ECO:0007669"/>
    <property type="project" value="Ensembl"/>
</dbReference>
<dbReference type="GO" id="GO:0045931">
    <property type="term" value="P:positive regulation of mitotic cell cycle"/>
    <property type="evidence" value="ECO:0007669"/>
    <property type="project" value="Ensembl"/>
</dbReference>
<dbReference type="GO" id="GO:0040018">
    <property type="term" value="P:positive regulation of multicellular organism growth"/>
    <property type="evidence" value="ECO:0007669"/>
    <property type="project" value="Ensembl"/>
</dbReference>
<dbReference type="GO" id="GO:0032825">
    <property type="term" value="P:positive regulation of natural killer cell differentiation"/>
    <property type="evidence" value="ECO:0007669"/>
    <property type="project" value="Ensembl"/>
</dbReference>
<dbReference type="GO" id="GO:0045954">
    <property type="term" value="P:positive regulation of natural killer cell mediated cytotoxicity"/>
    <property type="evidence" value="ECO:0007669"/>
    <property type="project" value="Ensembl"/>
</dbReference>
<dbReference type="GO" id="GO:0032819">
    <property type="term" value="P:positive regulation of natural killer cell proliferation"/>
    <property type="evidence" value="ECO:0007669"/>
    <property type="project" value="Ensembl"/>
</dbReference>
<dbReference type="GO" id="GO:0045944">
    <property type="term" value="P:positive regulation of transcription by RNA polymerase II"/>
    <property type="evidence" value="ECO:0000250"/>
    <property type="project" value="UniProtKB"/>
</dbReference>
<dbReference type="GO" id="GO:0042448">
    <property type="term" value="P:progesterone metabolic process"/>
    <property type="evidence" value="ECO:0007669"/>
    <property type="project" value="Ensembl"/>
</dbReference>
<dbReference type="GO" id="GO:0042127">
    <property type="term" value="P:regulation of cell population proliferation"/>
    <property type="evidence" value="ECO:0000318"/>
    <property type="project" value="GO_Central"/>
</dbReference>
<dbReference type="GO" id="GO:0030856">
    <property type="term" value="P:regulation of epithelial cell differentiation"/>
    <property type="evidence" value="ECO:0007669"/>
    <property type="project" value="Ensembl"/>
</dbReference>
<dbReference type="GO" id="GO:0040014">
    <property type="term" value="P:regulation of multicellular organism growth"/>
    <property type="evidence" value="ECO:0000250"/>
    <property type="project" value="BHF-UCL"/>
</dbReference>
<dbReference type="GO" id="GO:0019218">
    <property type="term" value="P:regulation of steroid metabolic process"/>
    <property type="evidence" value="ECO:0007669"/>
    <property type="project" value="Ensembl"/>
</dbReference>
<dbReference type="GO" id="GO:0006357">
    <property type="term" value="P:regulation of transcription by RNA polymerase II"/>
    <property type="evidence" value="ECO:0000318"/>
    <property type="project" value="GO_Central"/>
</dbReference>
<dbReference type="GO" id="GO:0032355">
    <property type="term" value="P:response to estradiol"/>
    <property type="evidence" value="ECO:0000314"/>
    <property type="project" value="BHF-UCL"/>
</dbReference>
<dbReference type="GO" id="GO:0070672">
    <property type="term" value="P:response to interleukin-15"/>
    <property type="evidence" value="ECO:0007669"/>
    <property type="project" value="Ensembl"/>
</dbReference>
<dbReference type="GO" id="GO:0070669">
    <property type="term" value="P:response to interleukin-2"/>
    <property type="evidence" value="ECO:0007669"/>
    <property type="project" value="Ensembl"/>
</dbReference>
<dbReference type="GO" id="GO:0070670">
    <property type="term" value="P:response to interleukin-4"/>
    <property type="evidence" value="ECO:0007669"/>
    <property type="project" value="Ensembl"/>
</dbReference>
<dbReference type="GO" id="GO:0043434">
    <property type="term" value="P:response to peptide hormone"/>
    <property type="evidence" value="ECO:0000318"/>
    <property type="project" value="GO_Central"/>
</dbReference>
<dbReference type="GO" id="GO:0033077">
    <property type="term" value="P:T cell differentiation in thymus"/>
    <property type="evidence" value="ECO:0007669"/>
    <property type="project" value="Ensembl"/>
</dbReference>
<dbReference type="GO" id="GO:0043029">
    <property type="term" value="P:T cell homeostasis"/>
    <property type="evidence" value="ECO:0007669"/>
    <property type="project" value="Ensembl"/>
</dbReference>
<dbReference type="GO" id="GO:0019530">
    <property type="term" value="P:taurine metabolic process"/>
    <property type="evidence" value="ECO:0000250"/>
    <property type="project" value="BHF-UCL"/>
</dbReference>
<dbReference type="GO" id="GO:0006366">
    <property type="term" value="P:transcription by RNA polymerase II"/>
    <property type="evidence" value="ECO:0007669"/>
    <property type="project" value="Ensembl"/>
</dbReference>
<dbReference type="CDD" id="cd10420">
    <property type="entry name" value="SH2_STAT5b"/>
    <property type="match status" value="1"/>
</dbReference>
<dbReference type="CDD" id="cd16855">
    <property type="entry name" value="STAT5_CCD"/>
    <property type="match status" value="1"/>
</dbReference>
<dbReference type="CDD" id="cd16849">
    <property type="entry name" value="STAT5_DBD"/>
    <property type="match status" value="1"/>
</dbReference>
<dbReference type="FunFam" id="1.10.532.10:FF:000002">
    <property type="entry name" value="Signal transducer and activator of transcription"/>
    <property type="match status" value="1"/>
</dbReference>
<dbReference type="FunFam" id="1.20.1050.20:FF:000002">
    <property type="entry name" value="Signal transducer and activator of transcription"/>
    <property type="match status" value="1"/>
</dbReference>
<dbReference type="FunFam" id="2.60.40.630:FF:000002">
    <property type="entry name" value="Signal transducer and activator of transcription"/>
    <property type="match status" value="1"/>
</dbReference>
<dbReference type="FunFam" id="3.30.505.10:FF:000025">
    <property type="entry name" value="Signal transducer and activator of transcription"/>
    <property type="match status" value="1"/>
</dbReference>
<dbReference type="FunFam" id="1.10.238.10:FF:000029">
    <property type="entry name" value="Signal transducer and transcription activator 6"/>
    <property type="match status" value="1"/>
</dbReference>
<dbReference type="Gene3D" id="1.10.238.10">
    <property type="entry name" value="EF-hand"/>
    <property type="match status" value="1"/>
</dbReference>
<dbReference type="Gene3D" id="3.30.505.10">
    <property type="entry name" value="SH2 domain"/>
    <property type="match status" value="1"/>
</dbReference>
<dbReference type="Gene3D" id="1.20.1050.20">
    <property type="entry name" value="STAT transcription factor, all-alpha domain"/>
    <property type="match status" value="1"/>
</dbReference>
<dbReference type="Gene3D" id="2.60.40.630">
    <property type="entry name" value="STAT transcription factor, DNA-binding domain"/>
    <property type="match status" value="1"/>
</dbReference>
<dbReference type="Gene3D" id="1.10.532.10">
    <property type="entry name" value="STAT transcription factor, N-terminal domain"/>
    <property type="match status" value="1"/>
</dbReference>
<dbReference type="InterPro" id="IPR008967">
    <property type="entry name" value="p53-like_TF_DNA-bd_sf"/>
</dbReference>
<dbReference type="InterPro" id="IPR000980">
    <property type="entry name" value="SH2"/>
</dbReference>
<dbReference type="InterPro" id="IPR036860">
    <property type="entry name" value="SH2_dom_sf"/>
</dbReference>
<dbReference type="InterPro" id="IPR001217">
    <property type="entry name" value="STAT"/>
</dbReference>
<dbReference type="InterPro" id="IPR046994">
    <property type="entry name" value="STAT5_CCD"/>
</dbReference>
<dbReference type="InterPro" id="IPR035858">
    <property type="entry name" value="STAT5a/5b_DBD"/>
</dbReference>
<dbReference type="InterPro" id="IPR035886">
    <property type="entry name" value="STAT5b_SH2"/>
</dbReference>
<dbReference type="InterPro" id="IPR048988">
    <property type="entry name" value="STAT_linker"/>
</dbReference>
<dbReference type="InterPro" id="IPR036535">
    <property type="entry name" value="STAT_N_sf"/>
</dbReference>
<dbReference type="InterPro" id="IPR013800">
    <property type="entry name" value="STAT_TF_alpha"/>
</dbReference>
<dbReference type="InterPro" id="IPR015988">
    <property type="entry name" value="STAT_TF_coiled-coil"/>
</dbReference>
<dbReference type="InterPro" id="IPR013801">
    <property type="entry name" value="STAT_TF_DNA-bd"/>
</dbReference>
<dbReference type="InterPro" id="IPR012345">
    <property type="entry name" value="STAT_TF_DNA-bd_N"/>
</dbReference>
<dbReference type="InterPro" id="IPR013799">
    <property type="entry name" value="STAT_TF_prot_interaction"/>
</dbReference>
<dbReference type="PANTHER" id="PTHR11801">
    <property type="entry name" value="SIGNAL TRANSDUCER AND ACTIVATOR OF TRANSCRIPTION"/>
    <property type="match status" value="1"/>
</dbReference>
<dbReference type="Pfam" id="PF00017">
    <property type="entry name" value="SH2"/>
    <property type="match status" value="1"/>
</dbReference>
<dbReference type="Pfam" id="PF01017">
    <property type="entry name" value="STAT_alpha"/>
    <property type="match status" value="1"/>
</dbReference>
<dbReference type="Pfam" id="PF02864">
    <property type="entry name" value="STAT_bind"/>
    <property type="match status" value="1"/>
</dbReference>
<dbReference type="Pfam" id="PF02865">
    <property type="entry name" value="STAT_int"/>
    <property type="match status" value="1"/>
</dbReference>
<dbReference type="Pfam" id="PF21354">
    <property type="entry name" value="STAT_linker"/>
    <property type="match status" value="1"/>
</dbReference>
<dbReference type="SMART" id="SM00252">
    <property type="entry name" value="SH2"/>
    <property type="match status" value="1"/>
</dbReference>
<dbReference type="SMART" id="SM00964">
    <property type="entry name" value="STAT_int"/>
    <property type="match status" value="1"/>
</dbReference>
<dbReference type="SUPFAM" id="SSF49417">
    <property type="entry name" value="p53-like transcription factors"/>
    <property type="match status" value="1"/>
</dbReference>
<dbReference type="SUPFAM" id="SSF55550">
    <property type="entry name" value="SH2 domain"/>
    <property type="match status" value="1"/>
</dbReference>
<dbReference type="SUPFAM" id="SSF47655">
    <property type="entry name" value="STAT"/>
    <property type="match status" value="1"/>
</dbReference>
<dbReference type="SUPFAM" id="SSF48092">
    <property type="entry name" value="Transcription factor STAT-4 N-domain"/>
    <property type="match status" value="1"/>
</dbReference>
<dbReference type="PROSITE" id="PS50001">
    <property type="entry name" value="SH2"/>
    <property type="match status" value="1"/>
</dbReference>
<keyword id="KW-0002">3D-structure</keyword>
<keyword id="KW-0010">Activator</keyword>
<keyword id="KW-0963">Cytoplasm</keyword>
<keyword id="KW-0225">Disease variant</keyword>
<keyword id="KW-0238">DNA-binding</keyword>
<keyword id="KW-0242">Dwarfism</keyword>
<keyword id="KW-0539">Nucleus</keyword>
<keyword id="KW-0597">Phosphoprotein</keyword>
<keyword id="KW-1267">Proteomics identification</keyword>
<keyword id="KW-1185">Reference proteome</keyword>
<keyword id="KW-0727">SH2 domain</keyword>
<keyword id="KW-0804">Transcription</keyword>
<keyword id="KW-0805">Transcription regulation</keyword>
<feature type="chain" id="PRO_0000182429" description="Signal transducer and activator of transcription 5B">
    <location>
        <begin position="1"/>
        <end position="787"/>
    </location>
</feature>
<feature type="domain" description="SH2" evidence="3">
    <location>
        <begin position="589"/>
        <end position="686"/>
    </location>
</feature>
<feature type="region of interest" description="Required for interaction with NMI" evidence="20">
    <location>
        <begin position="232"/>
        <end position="321"/>
    </location>
</feature>
<feature type="modified residue" description="Phosphotyrosine" evidence="27">
    <location>
        <position position="90"/>
    </location>
</feature>
<feature type="modified residue" description="Phosphoserine" evidence="25 27">
    <location>
        <position position="128"/>
    </location>
</feature>
<feature type="modified residue" description="Phosphoserine" evidence="23 24 26 27">
    <location>
        <position position="193"/>
    </location>
</feature>
<feature type="modified residue" description="Phosphotyrosine" evidence="1">
    <location>
        <position position="682"/>
    </location>
</feature>
<feature type="modified residue" description="Phosphotyrosine; by HCK, JAK and PTK6" evidence="5 12">
    <location>
        <position position="699"/>
    </location>
</feature>
<feature type="sequence variant" id="VAR_052074" description="In dbSNP:rs2277619.">
    <original>A</original>
    <variation>V</variation>
    <location>
        <position position="130"/>
    </location>
</feature>
<feature type="sequence variant" id="VAR_085463" description="In GHISID2; exhibits strong growth hormone-induced phosphorylation, but no subsequent nuclear localization; when forming homodimers with the wild-type protein, may also prevent its nuclear localization following growth hormone-stimulation; dbSNP:rs1555549674." evidence="17">
    <original>Q</original>
    <variation>P</variation>
    <location>
        <position position="177"/>
    </location>
</feature>
<feature type="sequence variant" id="VAR_085464" description="In GHISID2; loss of DNA-binding ability; when forming homodimers with the wild-type protein, may prevent wild-type binding to DNA; consequently, disruption of transcriptional activity; dbSNP:rs1555548680." evidence="17">
    <original>Q</original>
    <variation>R</variation>
    <location>
        <position position="474"/>
    </location>
</feature>
<feature type="sequence variant" id="VAR_085465" description="In GHISID2; loss of DNA-binding ability; when forming homodimers with the wild-type protein, may prevent wild-type binding to DNA; consequently, disruption of transcriptional activity; dbSNP:rs1555548678." evidence="17">
    <original>A</original>
    <variation>V</variation>
    <location>
        <position position="478"/>
    </location>
</feature>
<feature type="sequence variant" id="VAR_018728" description="In GHISID1; affects activation by growth hormone or interferon-gamma; dbSNP:rs121908501." evidence="7">
    <original>A</original>
    <variation>P</variation>
    <location>
        <position position="630"/>
    </location>
</feature>
<feature type="sequence variant" id="VAR_067368" description="In GHISID1; transcriptionally inactive." evidence="16">
    <original>F</original>
    <variation>S</variation>
    <location>
        <position position="646"/>
    </location>
</feature>
<feature type="mutagenesis site" description="Abolishes interaction with INSR." evidence="19">
    <original>T</original>
    <variation>A</variation>
    <location>
        <position position="684"/>
    </location>
</feature>
<feature type="mutagenesis site" description="Abolishes phosphorylation by HCK." evidence="5">
    <original>Y</original>
    <variation>F</variation>
    <location>
        <position position="699"/>
    </location>
</feature>
<feature type="sequence conflict" description="In Ref. 2; AAC50491." evidence="22" ref="2">
    <original>A</original>
    <variation>P</variation>
    <location>
        <position position="230"/>
    </location>
</feature>
<feature type="helix" evidence="29">
    <location>
        <begin position="141"/>
        <end position="182"/>
    </location>
</feature>
<feature type="helix" evidence="29">
    <location>
        <begin position="194"/>
        <end position="249"/>
    </location>
</feature>
<feature type="helix" evidence="29">
    <location>
        <begin position="251"/>
        <end position="262"/>
    </location>
</feature>
<feature type="turn" evidence="29">
    <location>
        <begin position="263"/>
        <end position="265"/>
    </location>
</feature>
<feature type="helix" evidence="29">
    <location>
        <begin position="273"/>
        <end position="302"/>
    </location>
</feature>
<feature type="helix" evidence="29">
    <location>
        <begin position="309"/>
        <end position="330"/>
    </location>
</feature>
<feature type="strand" evidence="29">
    <location>
        <begin position="332"/>
        <end position="336"/>
    </location>
</feature>
<feature type="strand" evidence="29">
    <location>
        <begin position="340"/>
        <end position="343"/>
    </location>
</feature>
<feature type="strand" evidence="29">
    <location>
        <begin position="347"/>
        <end position="354"/>
    </location>
</feature>
<feature type="turn" evidence="29">
    <location>
        <begin position="355"/>
        <end position="364"/>
    </location>
</feature>
<feature type="strand" evidence="29">
    <location>
        <begin position="368"/>
        <end position="375"/>
    </location>
</feature>
<feature type="helix" evidence="29">
    <location>
        <begin position="376"/>
        <end position="383"/>
    </location>
</feature>
<feature type="strand" evidence="28">
    <location>
        <begin position="400"/>
        <end position="402"/>
    </location>
</feature>
<feature type="strand" evidence="29">
    <location>
        <begin position="404"/>
        <end position="406"/>
    </location>
</feature>
<feature type="turn" evidence="29">
    <location>
        <begin position="407"/>
        <end position="410"/>
    </location>
</feature>
<feature type="strand" evidence="29">
    <location>
        <begin position="411"/>
        <end position="421"/>
    </location>
</feature>
<feature type="turn" evidence="29">
    <location>
        <begin position="435"/>
        <end position="437"/>
    </location>
</feature>
<feature type="strand" evidence="29">
    <location>
        <begin position="440"/>
        <end position="449"/>
    </location>
</feature>
<feature type="turn" evidence="28">
    <location>
        <begin position="451"/>
        <end position="454"/>
    </location>
</feature>
<feature type="strand" evidence="29">
    <location>
        <begin position="456"/>
        <end position="462"/>
    </location>
</feature>
<feature type="strand" evidence="29">
    <location>
        <begin position="468"/>
        <end position="471"/>
    </location>
</feature>
<feature type="helix" evidence="29">
    <location>
        <begin position="472"/>
        <end position="488"/>
    </location>
</feature>
<feature type="strand" evidence="28">
    <location>
        <begin position="500"/>
        <end position="503"/>
    </location>
</feature>
<feature type="helix" evidence="29">
    <location>
        <begin position="504"/>
        <end position="519"/>
    </location>
</feature>
<feature type="helix" evidence="29">
    <location>
        <begin position="527"/>
        <end position="537"/>
    </location>
</feature>
<feature type="helix" evidence="29">
    <location>
        <begin position="545"/>
        <end position="548"/>
    </location>
</feature>
<feature type="strand" evidence="28">
    <location>
        <begin position="552"/>
        <end position="554"/>
    </location>
</feature>
<feature type="helix" evidence="29">
    <location>
        <begin position="555"/>
        <end position="559"/>
    </location>
</feature>
<feature type="strand" evidence="28">
    <location>
        <begin position="564"/>
        <end position="567"/>
    </location>
</feature>
<feature type="helix" evidence="29">
    <location>
        <begin position="569"/>
        <end position="583"/>
    </location>
</feature>
<feature type="helix" evidence="29">
    <location>
        <begin position="586"/>
        <end position="590"/>
    </location>
</feature>
<feature type="helix" evidence="29">
    <location>
        <begin position="600"/>
        <end position="608"/>
    </location>
</feature>
<feature type="strand" evidence="29">
    <location>
        <begin position="614"/>
        <end position="619"/>
    </location>
</feature>
<feature type="strand" evidence="29">
    <location>
        <begin position="621"/>
        <end position="623"/>
    </location>
</feature>
<feature type="strand" evidence="29">
    <location>
        <begin position="627"/>
        <end position="631"/>
    </location>
</feature>
<feature type="helix" evidence="29">
    <location>
        <begin position="636"/>
        <end position="638"/>
    </location>
</feature>
<feature type="helix" evidence="29">
    <location>
        <begin position="648"/>
        <end position="653"/>
    </location>
</feature>
<feature type="helix" evidence="29">
    <location>
        <begin position="656"/>
        <end position="662"/>
    </location>
</feature>
<feature type="strand" evidence="29">
    <location>
        <begin position="668"/>
        <end position="672"/>
    </location>
</feature>
<feature type="helix" evidence="29">
    <location>
        <begin position="675"/>
        <end position="679"/>
    </location>
</feature>
<feature type="turn" evidence="29">
    <location>
        <begin position="680"/>
        <end position="682"/>
    </location>
</feature>
<evidence type="ECO:0000250" key="1">
    <source>
        <dbReference type="UniProtKB" id="P42229"/>
    </source>
</evidence>
<evidence type="ECO:0000250" key="2">
    <source>
        <dbReference type="UniProtKB" id="P42232"/>
    </source>
</evidence>
<evidence type="ECO:0000255" key="3">
    <source>
        <dbReference type="PROSITE-ProRule" id="PRU00191"/>
    </source>
</evidence>
<evidence type="ECO:0000269" key="4">
    <source>
    </source>
</evidence>
<evidence type="ECO:0000269" key="5">
    <source>
    </source>
</evidence>
<evidence type="ECO:0000269" key="6">
    <source>
    </source>
</evidence>
<evidence type="ECO:0000269" key="7">
    <source>
    </source>
</evidence>
<evidence type="ECO:0000269" key="8">
    <source>
    </source>
</evidence>
<evidence type="ECO:0000269" key="9">
    <source>
    </source>
</evidence>
<evidence type="ECO:0000269" key="10">
    <source>
    </source>
</evidence>
<evidence type="ECO:0000269" key="11">
    <source>
    </source>
</evidence>
<evidence type="ECO:0000269" key="12">
    <source>
    </source>
</evidence>
<evidence type="ECO:0000269" key="13">
    <source>
    </source>
</evidence>
<evidence type="ECO:0000269" key="14">
    <source>
    </source>
</evidence>
<evidence type="ECO:0000269" key="15">
    <source>
    </source>
</evidence>
<evidence type="ECO:0000269" key="16">
    <source>
    </source>
</evidence>
<evidence type="ECO:0000269" key="17">
    <source>
    </source>
</evidence>
<evidence type="ECO:0000269" key="18">
    <source>
    </source>
</evidence>
<evidence type="ECO:0000269" key="19">
    <source>
    </source>
</evidence>
<evidence type="ECO:0000269" key="20">
    <source>
    </source>
</evidence>
<evidence type="ECO:0000303" key="21">
    <source>
    </source>
</evidence>
<evidence type="ECO:0000305" key="22"/>
<evidence type="ECO:0007744" key="23">
    <source>
    </source>
</evidence>
<evidence type="ECO:0007744" key="24">
    <source>
    </source>
</evidence>
<evidence type="ECO:0007744" key="25">
    <source>
    </source>
</evidence>
<evidence type="ECO:0007744" key="26">
    <source>
    </source>
</evidence>
<evidence type="ECO:0007744" key="27">
    <source>
    </source>
</evidence>
<evidence type="ECO:0007829" key="28">
    <source>
        <dbReference type="PDB" id="6MBW"/>
    </source>
</evidence>
<evidence type="ECO:0007829" key="29">
    <source>
        <dbReference type="PDB" id="6MBZ"/>
    </source>
</evidence>
<proteinExistence type="evidence at protein level"/>
<protein>
    <recommendedName>
        <fullName>Signal transducer and activator of transcription 5B</fullName>
    </recommendedName>
</protein>
<name>STA5B_HUMAN</name>
<gene>
    <name type="primary">STAT5B</name>
</gene>
<sequence>MAVWIQAQQLQGEALHQMQALYGQHFPIEVRHYLSQWIESQAWDSVDLDNPQENIKATQLLEGLVQELQKKAEHQVGEDGFLLKIKLGHYATQLQNTYDRCPMELVRCIRHILYNEQRLVREANNGSSPAGSLADAMSQKHLQINQTFEELRLVTQDTENELKKLQQTQEYFIIQYQESLRIQAQFGPLAQLSPQERLSRETALQQKQVSLEAWLQREAQTLQQYRVELAEKHQKTLQLLRKQQTIILDDELIQWKRRQQLAGNGGPPEGSLDVLQSWCEKLAEIIWQNRQQIRRAEHLCQQLPIPGPVEEMLAEVNATITDIISALVTSTFIIEKQPPQVLKTQTKFAATVRLLVGGKLNVHMNPPQVKATIISEQQAKSLLKNENTRNDYSGEILNNCCVMEYHQATGTLSAHFRNMSLKRIKRSDRRGAESVTEEKFTILFESQFSVGGNELVFQVKTLSLPVVVIVHGSQDNNATATVLWDNAFAEPGRVPFAVPDKVLWPQLCEALNMKFKAEVQSNRGLTKENLVFLAQKLFNNSSSHLEDYSGLSVSWSQFNRENLPGRNYTFWQWFDGVMEVLKKHLKPHWNDGAILGFVNKQQAHDLLINKPDGTFLLRFSDSEIGGITIAWKFDSQERMFWNLMPFTTRDFSIRSLADRLGDLNYLIYVFPDRPKDEVYSKYYTPVPCESATAKAVDGYVKPQIKQVVPEFVNASADAGGGSATYMDQAPSPAVCPQAHYNMYPQNPDSVLDTDGDFDLEDTMDVARRVEELLGRPMDSQWIPHAQS</sequence>
<organism>
    <name type="scientific">Homo sapiens</name>
    <name type="common">Human</name>
    <dbReference type="NCBI Taxonomy" id="9606"/>
    <lineage>
        <taxon>Eukaryota</taxon>
        <taxon>Metazoa</taxon>
        <taxon>Chordata</taxon>
        <taxon>Craniata</taxon>
        <taxon>Vertebrata</taxon>
        <taxon>Euteleostomi</taxon>
        <taxon>Mammalia</taxon>
        <taxon>Eutheria</taxon>
        <taxon>Euarchontoglires</taxon>
        <taxon>Primates</taxon>
        <taxon>Haplorrhini</taxon>
        <taxon>Catarrhini</taxon>
        <taxon>Hominidae</taxon>
        <taxon>Homo</taxon>
    </lineage>
</organism>
<comment type="function">
    <text evidence="14 17 18">Carries out a dual function: signal transduction and activation of transcription (PubMed:29844444). Mediates cellular responses to the cytokine KITLG/SCF and other growth factors. Binds to the GAS element and activates PRL-induced transcription. Positively regulates hematopoietic/erythroid differentiation.</text>
</comment>
<comment type="subunit">
    <text evidence="2 6 10 13 17 19 20">Upon activation, forms homodimers (PubMed:29844444). Forms also heterodimers with related family members. Binds NR3C1 (By similarity). Interacts with NCOA1 (PubMed:12954634). Interacts with NMI (PubMed:9989503). Interacts with SOCS7 (PubMed:15677474). Interacts (via SH2 domain) with INSR (PubMed:9428692). Interacts with CPEB3; this inhibits STAT5B-mediated transcriptional activation (PubMed:20639532).</text>
</comment>
<comment type="interaction">
    <interactant intactId="EBI-1186119">
        <id>P51692</id>
    </interactant>
    <interactant intactId="EBI-375543">
        <id>P00519</id>
        <label>ABL1</label>
    </interactant>
    <organismsDiffer>false</organismsDiffer>
    <experiments>2</experiments>
</comment>
<comment type="interaction">
    <interactant intactId="EBI-1186119">
        <id>P51692</id>
    </interactant>
    <interactant intactId="EBI-375077">
        <id>P38936</id>
        <label>CDKN1A</label>
    </interactant>
    <organismsDiffer>false</organismsDiffer>
    <experiments>3</experiments>
</comment>
<comment type="interaction">
    <interactant intactId="EBI-1186119">
        <id>P51692</id>
    </interactant>
    <interactant intactId="EBI-1020839">
        <id>Q13111</id>
        <label>CHAF1A</label>
    </interactant>
    <organismsDiffer>false</organismsDiffer>
    <experiments>3</experiments>
</comment>
<comment type="interaction">
    <interactant intactId="EBI-1186119">
        <id>P51692</id>
    </interactant>
    <interactant intactId="EBI-356767">
        <id>Q96EY1</id>
        <label>DNAJA3</label>
    </interactant>
    <organismsDiffer>false</organismsDiffer>
    <experiments>2</experiments>
</comment>
<comment type="interaction">
    <interactant intactId="EBI-1186119">
        <id>P51692</id>
    </interactant>
    <interactant intactId="EBI-1642515">
        <id>I6L957</id>
        <label>HNRNPA2B1</label>
    </interactant>
    <organismsDiffer>false</organismsDiffer>
    <experiments>3</experiments>
</comment>
<comment type="interaction">
    <interactant intactId="EBI-1186119">
        <id>P51692</id>
    </interactant>
    <interactant intactId="EBI-10274069">
        <id>Q8TCE9</id>
        <label>LGALS14</label>
    </interactant>
    <organismsDiffer>false</organismsDiffer>
    <experiments>3</experiments>
</comment>
<comment type="interaction">
    <interactant intactId="EBI-1186119">
        <id>P51692</id>
    </interactant>
    <interactant intactId="EBI-2798728">
        <id>P61968</id>
        <label>LMO4</label>
    </interactant>
    <organismsDiffer>false</organismsDiffer>
    <experiments>3</experiments>
</comment>
<comment type="interaction">
    <interactant intactId="EBI-1186119">
        <id>P51692</id>
    </interactant>
    <interactant intactId="EBI-394558">
        <id>Q71SY5</id>
        <label>MED25</label>
    </interactant>
    <organismsDiffer>false</organismsDiffer>
    <experiments>3</experiments>
</comment>
<comment type="interaction">
    <interactant intactId="EBI-1186119">
        <id>P51692</id>
    </interactant>
    <interactant intactId="EBI-716172">
        <id>P82932</id>
        <label>MRPS6</label>
    </interactant>
    <organismsDiffer>false</organismsDiffer>
    <experiments>4</experiments>
</comment>
<comment type="interaction">
    <interactant intactId="EBI-1186119">
        <id>P51692</id>
    </interactant>
    <interactant intactId="EBI-372942">
        <id>Q13287</id>
        <label>NMI</label>
    </interactant>
    <organismsDiffer>false</organismsDiffer>
    <experiments>7</experiments>
</comment>
<comment type="interaction">
    <interactant intactId="EBI-1186119">
        <id>P51692</id>
    </interactant>
    <interactant intactId="EBI-79893">
        <id>Q92569</id>
        <label>PIK3R3</label>
    </interactant>
    <organismsDiffer>false</organismsDiffer>
    <experiments>3</experiments>
</comment>
<comment type="interaction">
    <interactant intactId="EBI-1186119">
        <id>P51692</id>
    </interactant>
    <interactant intactId="EBI-620823">
        <id>Q09028</id>
        <label>RBBP4</label>
    </interactant>
    <organismsDiffer>false</organismsDiffer>
    <experiments>3</experiments>
</comment>
<comment type="interaction">
    <interactant intactId="EBI-1186119">
        <id>P51692</id>
    </interactant>
    <interactant intactId="EBI-2652799">
        <id>Q99469</id>
        <label>STAC</label>
    </interactant>
    <organismsDiffer>false</organismsDiffer>
    <experiments>3</experiments>
</comment>
<comment type="interaction">
    <interactant intactId="EBI-1186119">
        <id>P51692</id>
    </interactant>
    <interactant intactId="EBI-1186119">
        <id>P51692</id>
        <label>STAT5B</label>
    </interactant>
    <organismsDiffer>false</organismsDiffer>
    <experiments>4</experiments>
</comment>
<comment type="interaction">
    <interactant intactId="EBI-1186119">
        <id>P51692</id>
    </interactant>
    <interactant intactId="EBI-3921347">
        <id>P51687</id>
        <label>SUOX</label>
    </interactant>
    <organismsDiffer>false</organismsDiffer>
    <experiments>3</experiments>
</comment>
<comment type="interaction">
    <interactant intactId="EBI-1186119">
        <id>P51692</id>
    </interactant>
    <interactant intactId="EBI-3918381">
        <id>Q96PN8</id>
        <label>TSSK3</label>
    </interactant>
    <organismsDiffer>false</organismsDiffer>
    <experiments>3</experiments>
</comment>
<comment type="interaction">
    <interactant intactId="EBI-1186119">
        <id>P51692</id>
    </interactant>
    <interactant intactId="EBI-743272">
        <id>O75604</id>
        <label>USP2</label>
    </interactant>
    <organismsDiffer>false</organismsDiffer>
    <experiments>3</experiments>
</comment>
<comment type="interaction">
    <interactant intactId="EBI-1186119">
        <id>P51692</id>
    </interactant>
    <interactant intactId="EBI-11741890">
        <id>Q86VK4-3</id>
        <label>ZNF410</label>
    </interactant>
    <organismsDiffer>false</organismsDiffer>
    <experiments>3</experiments>
</comment>
<comment type="subcellular location">
    <subcellularLocation>
        <location evidence="17">Cytoplasm</location>
    </subcellularLocation>
    <subcellularLocation>
        <location evidence="17">Nucleus</location>
    </subcellularLocation>
    <text evidence="17">Translocated into the nucleus in response to phosphorylation.</text>
</comment>
<comment type="PTM">
    <text evidence="5 8 9 12 15 19">Tyrosine phosphorylated in response to signaling via activated KIT, resulting in translocation to the nucleus. Tyrosine phosphorylated in response to signaling via activated FLT3; wild-type FLT3 results in much weaker phosphorylation than constitutively activated mutant FLT3. Alternatively, can be phosphorylated by JAK2. Phosphorylation at Tyr-699 by PTK6 or HCK leads to an increase of its transcriptional activity.</text>
</comment>
<comment type="disease" evidence="7 11 16">
    <disease id="DI-01878">
        <name>Growth hormone insensitivity syndrome with immune dysregulation 1, autosomal recessive</name>
        <acronym>GHISID1</acronym>
        <description>An autosomal recessive form of growth hormone insensitivity syndrome, a congenital disease characterized by short stature, growth hormone deficiency in the presence of normal to elevated circulating concentrations of growth hormone, resistance to exogeneous growth hormone therapy, and recurrent infections. Most, but not all, patients have features of immune dysregulation.</description>
        <dbReference type="MIM" id="245590"/>
    </disease>
    <text>The disease is caused by variants affecting the gene represented in this entry.</text>
</comment>
<comment type="disease" evidence="17">
    <disease id="DI-05897">
        <name>Growth hormone insensitivity syndrome with immune dysregulation 2, autosomal dominant</name>
        <acronym>GHISID2</acronym>
        <description>An autosomal dominant form of growth hormone insensitivity syndrome, a congenital disease characterized by short stature, growth hormone deficiency in the presence of normal to elevated circulating concentrations of growth hormone, resistance to exogeneous growth hormone therapy, and recurrent infections. GHISID2 patients usually have delayed bone age, delayed puberty, and decreased serum IGF1. Some patients may have features of mild immune dysregulation, such as eczema, increased serum IgE, asthma, or celiac disease.</description>
        <dbReference type="MIM" id="618985"/>
    </disease>
    <text>The disease is caused by variants affecting the gene represented in this entry.</text>
</comment>
<comment type="similarity">
    <text evidence="22">Belongs to the transcription factor STAT family.</text>
</comment>
<comment type="caution">
    <text evidence="4 21">It was reported that dephosphorylation on tyrosine residues by PTPN2 would negatively regulate prolactin signaling pathway (PubMed:11773439). However, the corresponding article has been retracted (PubMed:24319783).</text>
</comment>
<comment type="online information" name="STAT5Bbase">
    <link uri="https://databases.lovd.nl/shared/genes/STAT5B"/>
    <text>STAT5B mutation db</text>
</comment>
<comment type="online information" name="Wikipedia">
    <link uri="https://en.wikipedia.org/wiki/STAT5"/>
    <text>STAT5 entry</text>
</comment>
<comment type="online information" name="Atlas of Genetics and Cytogenetics in Oncology and Haematology">
    <link uri="https://atlasgeneticsoncology.org/gene/217/STAT5B"/>
</comment>
<accession>P51692</accession>
<accession>Q8WWS8</accession>
<reference key="1">
    <citation type="journal article" date="1996" name="Mol. Endocrinol.">
        <title>Characterization and cloning of STAT5 from IM-9 cells and its activation by growth hormone.</title>
        <authorList>
            <person name="Silva C.M."/>
            <person name="Lu H."/>
            <person name="Day R.N."/>
        </authorList>
    </citation>
    <scope>NUCLEOTIDE SEQUENCE [MRNA]</scope>
    <scope>FUNCTION</scope>
</reference>
<reference key="2">
    <citation type="submission" date="2003-07" db="EMBL/GenBank/DDBJ databases">
        <authorList>
            <person name="Silva C.M."/>
            <person name="Lu H."/>
        </authorList>
    </citation>
    <scope>SEQUENCE REVISION TO 628; 717 AND 720</scope>
</reference>
<reference key="3">
    <citation type="journal article" date="1996" name="J. Biol. Chem.">
        <title>Cloning of human Stat5B. Reconstitution of interleukin-2-induced Stat5A and Stat5B DNA binding activity in COS-7 cells.</title>
        <authorList>
            <person name="Lin J.-X."/>
            <person name="Mietz J."/>
            <person name="Modi W.S."/>
            <person name="John S."/>
            <person name="Leonard W.J."/>
        </authorList>
    </citation>
    <scope>NUCLEOTIDE SEQUENCE [MRNA]</scope>
</reference>
<reference key="4">
    <citation type="journal article" date="2002" name="Gene">
        <title>The structure of human STAT5A and B genes reveals two regions of nearly identical sequence and an alternative tissue specific STAT5B promoter.</title>
        <authorList>
            <person name="Ambrosio R."/>
            <person name="Fimiani G."/>
            <person name="Monfregola J."/>
            <person name="Sanzari E."/>
            <person name="De Felice N."/>
            <person name="Salerno M.C."/>
            <person name="Pignata C."/>
            <person name="D'Urso M."/>
            <person name="Ursini M.V."/>
        </authorList>
    </citation>
    <scope>NUCLEOTIDE SEQUENCE [GENOMIC DNA]</scope>
</reference>
<reference key="5">
    <citation type="journal article" date="2004" name="Genome Res.">
        <title>The status, quality, and expansion of the NIH full-length cDNA project: the Mammalian Gene Collection (MGC).</title>
        <authorList>
            <consortium name="The MGC Project Team"/>
        </authorList>
    </citation>
    <scope>NUCLEOTIDE SEQUENCE [LARGE SCALE MRNA]</scope>
    <source>
        <tissue>Lymph</tissue>
    </source>
</reference>
<reference key="6">
    <citation type="journal article" date="1997" name="Eur. J. Biochem.">
        <title>Identification of Stat 5B as a substrate of the insulin receptor.</title>
        <authorList>
            <person name="Sawka-Verhelle D."/>
            <person name="Filloux C."/>
            <person name="Tartare-Deckert S."/>
            <person name="Mothe I."/>
            <person name="Van Obberghen E."/>
        </authorList>
    </citation>
    <scope>PHOSPHORYLATION BY INSR</scope>
    <scope>INTERACTION WITH INSR</scope>
    <scope>MUTAGENESIS OF THR-684</scope>
</reference>
<reference key="7">
    <citation type="journal article" date="1999" name="Cell">
        <title>Functional association of Nmi with Stat5 and Stat1 in IL-2- and IFNgamma-mediated signaling.</title>
        <authorList>
            <person name="Zhu M.-H."/>
            <person name="John S."/>
            <person name="Berg M."/>
            <person name="Leonard W.J."/>
        </authorList>
    </citation>
    <scope>INTERACTION WITH NMI</scope>
</reference>
<reference key="8">
    <citation type="journal article" date="2002" name="EMBO J.">
        <title>The Src family kinase Hck couples BCR/ABL to STAT5 activation in myeloid leukemia cells.</title>
        <authorList>
            <person name="Klejman A."/>
            <person name="Schreiner S.J."/>
            <person name="Nieborowska-Skorska M."/>
            <person name="Slupianek A."/>
            <person name="Wilson M."/>
            <person name="Smithgall T.E."/>
            <person name="Skorski T."/>
        </authorList>
    </citation>
    <scope>PHOSPHORYLATION AT TYR-699</scope>
    <scope>MUTAGENESIS OF TYR-699</scope>
</reference>
<reference key="9">
    <citation type="journal article" date="2002" name="Mol. Endocrinol.">
        <title>A nuclear protein tyrosine phosphatase TC-PTP is a potential negative regulator of the PRL-mediated signaling pathway: dephosphorylation and deactivation of signal transducer and activator of transcription 5a and 5b by TC-PTP in nucleus.</title>
        <authorList>
            <person name="Aoki N."/>
            <person name="Matsuda T."/>
        </authorList>
    </citation>
    <scope>RETRACTED PAPER</scope>
</reference>
<reference key="10">
    <citation type="journal article" date="2013" name="Mol. Endocrinol.">
        <title>Retraction.</title>
        <authorList>
            <person name="Aoki N."/>
            <person name="Matsuda T."/>
        </authorList>
    </citation>
    <scope>RETRACTION NOTICE OF PUBMED:11773439</scope>
    <scope>CAUTION</scope>
</reference>
<reference key="11">
    <citation type="journal article" date="2006" name="Nat. Biotechnol.">
        <title>A probability-based approach for high-throughput protein phosphorylation analysis and site localization.</title>
        <authorList>
            <person name="Beausoleil S.A."/>
            <person name="Villen J."/>
            <person name="Gerber S.A."/>
            <person name="Rush J."/>
            <person name="Gygi S.P."/>
        </authorList>
    </citation>
    <scope>PHOSPHORYLATION [LARGE SCALE ANALYSIS] AT SER-193</scope>
    <scope>IDENTIFICATION BY MASS SPECTROMETRY [LARGE SCALE ANALYSIS]</scope>
    <source>
        <tissue>Cervix carcinoma</tissue>
    </source>
</reference>
<reference key="12">
    <citation type="journal article" date="2008" name="Mol. Cell">
        <title>Kinase-selective enrichment enables quantitative phosphoproteomics of the kinome across the cell cycle.</title>
        <authorList>
            <person name="Daub H."/>
            <person name="Olsen J.V."/>
            <person name="Bairlein M."/>
            <person name="Gnad F."/>
            <person name="Oppermann F.S."/>
            <person name="Korner R."/>
            <person name="Greff Z."/>
            <person name="Keri G."/>
            <person name="Stemmann O."/>
            <person name="Mann M."/>
        </authorList>
    </citation>
    <scope>PHOSPHORYLATION [LARGE SCALE ANALYSIS] AT SER-193</scope>
    <scope>IDENTIFICATION BY MASS SPECTROMETRY [LARGE SCALE ANALYSIS]</scope>
    <source>
        <tissue>Cervix carcinoma</tissue>
    </source>
</reference>
<reference key="13">
    <citation type="journal article" date="2008" name="Proc. Natl. Acad. Sci. U.S.A.">
        <title>A quantitative atlas of mitotic phosphorylation.</title>
        <authorList>
            <person name="Dephoure N."/>
            <person name="Zhou C."/>
            <person name="Villen J."/>
            <person name="Beausoleil S.A."/>
            <person name="Bakalarski C.E."/>
            <person name="Elledge S.J."/>
            <person name="Gygi S.P."/>
        </authorList>
    </citation>
    <scope>IDENTIFICATION BY MASS SPECTROMETRY [LARGE SCALE ANALYSIS]</scope>
    <source>
        <tissue>Cervix carcinoma</tissue>
    </source>
</reference>
<reference key="14">
    <citation type="journal article" date="2009" name="Sci. Signal.">
        <title>Quantitative phosphoproteomic analysis of T cell receptor signaling reveals system-wide modulation of protein-protein interactions.</title>
        <authorList>
            <person name="Mayya V."/>
            <person name="Lundgren D.H."/>
            <person name="Hwang S.-I."/>
            <person name="Rezaul K."/>
            <person name="Wu L."/>
            <person name="Eng J.K."/>
            <person name="Rodionov V."/>
            <person name="Han D.K."/>
        </authorList>
    </citation>
    <scope>PHOSPHORYLATION [LARGE SCALE ANALYSIS] AT SER-128</scope>
    <scope>IDENTIFICATION BY MASS SPECTROMETRY [LARGE SCALE ANALYSIS]</scope>
    <source>
        <tissue>Leukemic T-cell</tissue>
    </source>
</reference>
<reference key="15">
    <citation type="journal article" date="2010" name="Sci. Signal.">
        <title>Quantitative phosphoproteomics reveals widespread full phosphorylation site occupancy during mitosis.</title>
        <authorList>
            <person name="Olsen J.V."/>
            <person name="Vermeulen M."/>
            <person name="Santamaria A."/>
            <person name="Kumar C."/>
            <person name="Miller M.L."/>
            <person name="Jensen L.J."/>
            <person name="Gnad F."/>
            <person name="Cox J."/>
            <person name="Jensen T.S."/>
            <person name="Nigg E.A."/>
            <person name="Brunak S."/>
            <person name="Mann M."/>
        </authorList>
    </citation>
    <scope>PHOSPHORYLATION [LARGE SCALE ANALYSIS] AT SER-193</scope>
    <scope>IDENTIFICATION BY MASS SPECTROMETRY [LARGE SCALE ANALYSIS]</scope>
    <source>
        <tissue>Cervix carcinoma</tissue>
    </source>
</reference>
<reference key="16">
    <citation type="journal article" date="2011" name="BMC Syst. Biol.">
        <title>Initial characterization of the human central proteome.</title>
        <authorList>
            <person name="Burkard T.R."/>
            <person name="Planyavsky M."/>
            <person name="Kaupe I."/>
            <person name="Breitwieser F.P."/>
            <person name="Buerckstuemmer T."/>
            <person name="Bennett K.L."/>
            <person name="Superti-Furga G."/>
            <person name="Colinge J."/>
        </authorList>
    </citation>
    <scope>IDENTIFICATION BY MASS SPECTROMETRY [LARGE SCALE ANALYSIS]</scope>
</reference>
<reference key="17">
    <citation type="journal article" date="2013" name="J. Proteome Res.">
        <title>Toward a comprehensive characterization of a human cancer cell phosphoproteome.</title>
        <authorList>
            <person name="Zhou H."/>
            <person name="Di Palma S."/>
            <person name="Preisinger C."/>
            <person name="Peng M."/>
            <person name="Polat A.N."/>
            <person name="Heck A.J."/>
            <person name="Mohammed S."/>
        </authorList>
    </citation>
    <scope>PHOSPHORYLATION [LARGE SCALE ANALYSIS] AT TYR-90; SER-128 AND SER-193</scope>
    <scope>IDENTIFICATION BY MASS SPECTROMETRY [LARGE SCALE ANALYSIS]</scope>
    <source>
        <tissue>Cervix carcinoma</tissue>
        <tissue>Erythroleukemia</tissue>
    </source>
</reference>
<reference key="18">
    <citation type="journal article" date="2003" name="J. Biol. Chem.">
        <title>NCoA-1/SRC-1 is an essential coactivator of STAT5 that binds to the FDL motif in the alpha-helical region of the STAT5 transactivation domain.</title>
        <authorList>
            <person name="Litterst C.M."/>
            <person name="Kliem S."/>
            <person name="Marilley D."/>
            <person name="Pfitzner E."/>
        </authorList>
    </citation>
    <scope>INTERACTION WITH NCOA1</scope>
</reference>
<reference key="19">
    <citation type="journal article" date="2004" name="Blood">
        <title>FLT3 mutations in the activation loop of tyrosine kinase domain are frequently found in infant ALL with MLL rearrangements and pediatric ALL with hyperdiploidy.</title>
        <authorList>
            <person name="Taketani T."/>
            <person name="Taki T."/>
            <person name="Sugita K."/>
            <person name="Furuichi Y."/>
            <person name="Ishii E."/>
            <person name="Hanada R."/>
            <person name="Tsuchida M."/>
            <person name="Sugita K."/>
            <person name="Ida K."/>
            <person name="Hayashi Y."/>
        </authorList>
    </citation>
    <scope>PHOSPHORYLATION IN RESPONSE TO FLT3 SIGNALING</scope>
</reference>
<reference key="20">
    <citation type="journal article" date="2004" name="Cell. Mol. Life Sci.">
        <title>Signal transduction via the stem cell factor receptor/c-Kit.</title>
        <authorList>
            <person name="Ronnstrand L."/>
        </authorList>
    </citation>
    <scope>REVIEW ON ROLE IN KIT SIGNALING</scope>
</reference>
<reference key="21">
    <citation type="journal article" date="2004" name="Mol. Cell. Biol.">
        <title>Tyrosine 813 is a site of JAK2 autophosphorylation critical for activation of JAK2 by SH2-B beta.</title>
        <authorList>
            <person name="Kurzer J.H."/>
            <person name="Argetsinger L.S."/>
            <person name="Zhou Y.J."/>
            <person name="Kouadio J.L."/>
            <person name="O'Shea J.J."/>
            <person name="Carter-Su C."/>
        </authorList>
    </citation>
    <scope>PHOSPHORYLATION BY JAK2</scope>
</reference>
<reference key="22">
    <citation type="journal article" date="2005" name="J. Biol. Chem.">
        <title>Suppressor of cytokine signaling 7 inhibits prolactin, growth hormone, and leptin signaling by interacting with STAT5 or STAT3 and attenuating their nuclear translocation.</title>
        <authorList>
            <person name="Martens N."/>
            <person name="Uzan G."/>
            <person name="Wery M."/>
            <person name="Hooghe R."/>
            <person name="Hooghe-Peters E.L."/>
            <person name="Gertler A."/>
        </authorList>
    </citation>
    <scope>INTERACTION WITH SOCS7</scope>
</reference>
<reference key="23">
    <citation type="journal article" date="2005" name="J. Clin. Endocrinol. Metab.">
        <title>Severe growth hormone insensitivity resulting from total absence of signal transducer and activator of transcription 5b.</title>
        <authorList>
            <person name="Hwa V."/>
            <person name="Little B."/>
            <person name="Adiyaman P."/>
            <person name="Kofoed E.M."/>
            <person name="Pratt K.L."/>
            <person name="Ocal G."/>
            <person name="Berberoglu M."/>
            <person name="Rosenfeld R.G."/>
        </authorList>
    </citation>
    <scope>INVOLVEMENT IN GHISID1</scope>
</reference>
<reference key="24">
    <citation type="journal article" date="2007" name="Breast Cancer Res.">
        <title>Signal transducer and activator of transcription 5b: a new target of breast tumor kinase/protein tyrosine kinase 6.</title>
        <authorList>
            <person name="Weaver A.M."/>
            <person name="Silva C.M."/>
        </authorList>
    </citation>
    <scope>PHOSPHORYLATION AT TYR-699 BY PTK6</scope>
</reference>
<reference key="25">
    <citation type="journal article" date="2010" name="Mol. Biol. Cell">
        <title>ZFP36L1 negatively regulates erythroid differentiation of CD34+ hematopoietic stem cells by interfering with the Stat5b pathway.</title>
        <authorList>
            <person name="Vignudelli T."/>
            <person name="Selmi T."/>
            <person name="Martello A."/>
            <person name="Parenti S."/>
            <person name="Grande A."/>
            <person name="Gemelli C."/>
            <person name="Zanocco-Marani T."/>
            <person name="Ferrari S."/>
        </authorList>
    </citation>
    <scope>FUNCTION</scope>
</reference>
<reference key="26">
    <citation type="journal article" date="2010" name="Nucleic Acids Res.">
        <title>A novel role of CPEB3 in regulating EGFR gene transcription via association with Stat5b in neurons.</title>
        <authorList>
            <person name="Peng S.C."/>
            <person name="Lai Y.T."/>
            <person name="Huang H.Y."/>
            <person name="Huang H.D."/>
            <person name="Huang Y.S."/>
        </authorList>
    </citation>
    <scope>INTERACTION WITH CPEB3</scope>
</reference>
<reference key="27">
    <citation type="journal article" date="2011" name="J. Biol. Chem.">
        <title>Mechanisms of STAT protein activation by oncogenic KIT mutants in neoplastic mast cells.</title>
        <authorList>
            <person name="Chaix A."/>
            <person name="Lopez S."/>
            <person name="Voisset E."/>
            <person name="Gros L."/>
            <person name="Dubreuil P."/>
            <person name="De Sepulveda P."/>
        </authorList>
    </citation>
    <scope>PHOSPHORYLATION IN RESPONSE TO KIT SIGNALING</scope>
</reference>
<reference key="28">
    <citation type="journal article" date="2018" name="Nat. Commun.">
        <title>Dominant-negative STAT5B mutations cause growth hormone insensitivity with short stature and mild immune dysregulation.</title>
        <authorList>
            <person name="Klammt J."/>
            <person name="Neumann D."/>
            <person name="Gevers E.F."/>
            <person name="Andrew S.F."/>
            <person name="Schwartz I.D."/>
            <person name="Rockstroh D."/>
            <person name="Colombo R."/>
            <person name="Sanchez M.A."/>
            <person name="Vokurkova D."/>
            <person name="Kowalczyk J."/>
            <person name="Metherell L.A."/>
            <person name="Rosenfeld R.G."/>
            <person name="Pfaeffle R."/>
            <person name="Dattani M.T."/>
            <person name="Dauber A."/>
            <person name="Hwa V."/>
        </authorList>
    </citation>
    <scope>INVOLVEMENT IN GHISID2</scope>
    <scope>VARIANTS GHISID2 PRO-177; ARG-474 AND VAL-478</scope>
    <scope>CHARACTERIZATION OF VARIANTS GHISID2 PRO-177; ARG-474 AND VAL-478</scope>
    <scope>FUNCTION</scope>
    <scope>HOMODIMERIZATION</scope>
    <scope>SUBCELLULAR LOCATION</scope>
</reference>
<reference key="29">
    <citation type="journal article" date="2003" name="N. Engl. J. Med.">
        <title>Growth hormone insensitivity associated with a STAT5b mutation.</title>
        <authorList>
            <person name="Kofoed E.M."/>
            <person name="Hwa V."/>
            <person name="Little B."/>
            <person name="Woods K.A."/>
            <person name="Buckway C.K."/>
            <person name="Tsubaki J."/>
            <person name="Pratt K.L."/>
            <person name="Bezrodnik L."/>
            <person name="Jasper H."/>
            <person name="Tepper A."/>
            <person name="Heinrich J.J."/>
            <person name="Rosenfeld R.G."/>
        </authorList>
    </citation>
    <scope>VARIANT GHISID1 PRO-630</scope>
</reference>
<reference key="30">
    <citation type="journal article" date="2012" name="J. Clin. Endocrinol. Metab.">
        <title>A Novel Missense Mutation in the SH2 Domain of the STAT5B Gene Results in a transcriptionally inactive STAT5b associated with severe IGF-I deficiency, immune dysfunction, and lack of pulmonary disease.</title>
        <authorList>
            <person name="Scaglia P.A."/>
            <person name="Martinez A.S."/>
            <person name="Feigerlova E."/>
            <person name="Bezrodnik L."/>
            <person name="Gaillard M.I."/>
            <person name="Di Giovanni D."/>
            <person name="Ballerini M.G."/>
            <person name="Jasper H.G."/>
            <person name="Heinrich J.J."/>
            <person name="Fang P."/>
            <person name="Domene H.M."/>
            <person name="Rosenfeld R.G."/>
            <person name="Hwa V."/>
        </authorList>
    </citation>
    <scope>VARIANT GHISID1 SER-646</scope>
    <scope>CHARACTERIZATION OF VARIANT GHISID1 SER-646</scope>
</reference>